<protein>
    <recommendedName>
        <fullName evidence="1">Threonine--tRNA ligase</fullName>
        <ecNumber evidence="1">6.1.1.3</ecNumber>
    </recommendedName>
    <alternativeName>
        <fullName evidence="1">Threonyl-tRNA synthetase</fullName>
        <shortName evidence="1">ThrRS</shortName>
    </alternativeName>
</protein>
<sequence length="635" mass="71692">MIQITLPDSSKRDYSGPVTVAEVAASIGTGLAKAALGGKVDGKLVDTSFLISQDSALSIVTAKDAEGLELIRHSAAHLLAYAVKELFPEAQVTIGPVIENGFFYDFSYKRPFTPEDLVAIEKRMAELVAKDEPVTRRVLPRDEAVAYFKSLGEYYKAEIIASIPANEDVSLYREGKFEDLCRGPHVPSTGKLKFFKLMKVAGAYWRGDHHNEMLQRIYGTAWATKDELQQYLTMLEEADKRDHRKLGKELDLFHIDDHSPGLVFWHPKGWTVWQGVEQYMRKVYQNNGYQEVKGPQLLDKTLWEKTGHWDKYRDNMFTTESEKRDFALKPMNCPGHILIFKQGIKSYRDLPLRYGEFGQCHRNEPTGGLHGIMRVRGFTQDDGHIFCTEEQILKECVDYTTLLQKVYTDFGFKNIIYKVATRPEARIGSDESWDKAEHALIESLRASGCEFEISPGEGAFYGPKIEYTLKDAIGRQWQCGTIQVDFSMPERLDAEYVGEDGARHRPVMLHRAIVGSLERFIGILIEEHAGALPTWLAPEQVSVLTITDSQAEYARGVAKTLQNQGLRVNLDLRNEKITYKIREHSLQKLPFILVVGDKEMAAGAVSVRARGNKDLGVMSLEAFAERIASDIAQKA</sequence>
<keyword id="KW-0030">Aminoacyl-tRNA synthetase</keyword>
<keyword id="KW-0067">ATP-binding</keyword>
<keyword id="KW-0963">Cytoplasm</keyword>
<keyword id="KW-0436">Ligase</keyword>
<keyword id="KW-0479">Metal-binding</keyword>
<keyword id="KW-0547">Nucleotide-binding</keyword>
<keyword id="KW-0648">Protein biosynthesis</keyword>
<keyword id="KW-1185">Reference proteome</keyword>
<keyword id="KW-0694">RNA-binding</keyword>
<keyword id="KW-0820">tRNA-binding</keyword>
<keyword id="KW-0862">Zinc</keyword>
<evidence type="ECO:0000255" key="1">
    <source>
        <dbReference type="HAMAP-Rule" id="MF_00184"/>
    </source>
</evidence>
<evidence type="ECO:0000255" key="2">
    <source>
        <dbReference type="PROSITE-ProRule" id="PRU01228"/>
    </source>
</evidence>
<feature type="chain" id="PRO_1000020460" description="Threonine--tRNA ligase">
    <location>
        <begin position="1"/>
        <end position="635"/>
    </location>
</feature>
<feature type="domain" description="TGS" evidence="2">
    <location>
        <begin position="1"/>
        <end position="61"/>
    </location>
</feature>
<feature type="region of interest" description="Catalytic" evidence="1">
    <location>
        <begin position="242"/>
        <end position="533"/>
    </location>
</feature>
<feature type="binding site" evidence="1">
    <location>
        <position position="333"/>
    </location>
    <ligand>
        <name>Zn(2+)</name>
        <dbReference type="ChEBI" id="CHEBI:29105"/>
    </ligand>
</feature>
<feature type="binding site" evidence="1">
    <location>
        <position position="384"/>
    </location>
    <ligand>
        <name>Zn(2+)</name>
        <dbReference type="ChEBI" id="CHEBI:29105"/>
    </ligand>
</feature>
<feature type="binding site" evidence="1">
    <location>
        <position position="510"/>
    </location>
    <ligand>
        <name>Zn(2+)</name>
        <dbReference type="ChEBI" id="CHEBI:29105"/>
    </ligand>
</feature>
<reference key="1">
    <citation type="journal article" date="2009" name="Environ. Microbiol.">
        <title>The genome of Polaromonas naphthalenivorans strain CJ2, isolated from coal tar-contaminated sediment, reveals physiological and metabolic versatility and evolution through extensive horizontal gene transfer.</title>
        <authorList>
            <person name="Yagi J.M."/>
            <person name="Sims D."/>
            <person name="Brettin T."/>
            <person name="Bruce D."/>
            <person name="Madsen E.L."/>
        </authorList>
    </citation>
    <scope>NUCLEOTIDE SEQUENCE [LARGE SCALE GENOMIC DNA]</scope>
    <source>
        <strain>CJ2</strain>
    </source>
</reference>
<name>SYT_POLNA</name>
<proteinExistence type="inferred from homology"/>
<comment type="function">
    <text evidence="1">Catalyzes the attachment of threonine to tRNA(Thr) in a two-step reaction: L-threonine is first activated by ATP to form Thr-AMP and then transferred to the acceptor end of tRNA(Thr). Also edits incorrectly charged L-seryl-tRNA(Thr).</text>
</comment>
<comment type="catalytic activity">
    <reaction evidence="1">
        <text>tRNA(Thr) + L-threonine + ATP = L-threonyl-tRNA(Thr) + AMP + diphosphate + H(+)</text>
        <dbReference type="Rhea" id="RHEA:24624"/>
        <dbReference type="Rhea" id="RHEA-COMP:9670"/>
        <dbReference type="Rhea" id="RHEA-COMP:9704"/>
        <dbReference type="ChEBI" id="CHEBI:15378"/>
        <dbReference type="ChEBI" id="CHEBI:30616"/>
        <dbReference type="ChEBI" id="CHEBI:33019"/>
        <dbReference type="ChEBI" id="CHEBI:57926"/>
        <dbReference type="ChEBI" id="CHEBI:78442"/>
        <dbReference type="ChEBI" id="CHEBI:78534"/>
        <dbReference type="ChEBI" id="CHEBI:456215"/>
        <dbReference type="EC" id="6.1.1.3"/>
    </reaction>
</comment>
<comment type="cofactor">
    <cofactor evidence="1">
        <name>Zn(2+)</name>
        <dbReference type="ChEBI" id="CHEBI:29105"/>
    </cofactor>
    <text evidence="1">Binds 1 zinc ion per subunit.</text>
</comment>
<comment type="subunit">
    <text evidence="1">Homodimer.</text>
</comment>
<comment type="subcellular location">
    <subcellularLocation>
        <location evidence="1">Cytoplasm</location>
    </subcellularLocation>
</comment>
<comment type="similarity">
    <text evidence="1">Belongs to the class-II aminoacyl-tRNA synthetase family.</text>
</comment>
<organism>
    <name type="scientific">Polaromonas naphthalenivorans (strain CJ2)</name>
    <dbReference type="NCBI Taxonomy" id="365044"/>
    <lineage>
        <taxon>Bacteria</taxon>
        <taxon>Pseudomonadati</taxon>
        <taxon>Pseudomonadota</taxon>
        <taxon>Betaproteobacteria</taxon>
        <taxon>Burkholderiales</taxon>
        <taxon>Comamonadaceae</taxon>
        <taxon>Polaromonas</taxon>
    </lineage>
</organism>
<accession>A1VR77</accession>
<dbReference type="EC" id="6.1.1.3" evidence="1"/>
<dbReference type="EMBL" id="CP000529">
    <property type="protein sequence ID" value="ABM38155.1"/>
    <property type="molecule type" value="Genomic_DNA"/>
</dbReference>
<dbReference type="RefSeq" id="WP_011802232.1">
    <property type="nucleotide sequence ID" value="NC_008781.1"/>
</dbReference>
<dbReference type="SMR" id="A1VR77"/>
<dbReference type="STRING" id="365044.Pnap_2854"/>
<dbReference type="KEGG" id="pna:Pnap_2854"/>
<dbReference type="eggNOG" id="COG0441">
    <property type="taxonomic scope" value="Bacteria"/>
</dbReference>
<dbReference type="HOGENOM" id="CLU_008554_0_1_4"/>
<dbReference type="OrthoDB" id="9802304at2"/>
<dbReference type="Proteomes" id="UP000000644">
    <property type="component" value="Chromosome"/>
</dbReference>
<dbReference type="GO" id="GO:0005737">
    <property type="term" value="C:cytoplasm"/>
    <property type="evidence" value="ECO:0007669"/>
    <property type="project" value="UniProtKB-SubCell"/>
</dbReference>
<dbReference type="GO" id="GO:0005524">
    <property type="term" value="F:ATP binding"/>
    <property type="evidence" value="ECO:0007669"/>
    <property type="project" value="UniProtKB-UniRule"/>
</dbReference>
<dbReference type="GO" id="GO:0046872">
    <property type="term" value="F:metal ion binding"/>
    <property type="evidence" value="ECO:0007669"/>
    <property type="project" value="UniProtKB-KW"/>
</dbReference>
<dbReference type="GO" id="GO:0004829">
    <property type="term" value="F:threonine-tRNA ligase activity"/>
    <property type="evidence" value="ECO:0007669"/>
    <property type="project" value="UniProtKB-UniRule"/>
</dbReference>
<dbReference type="GO" id="GO:0000049">
    <property type="term" value="F:tRNA binding"/>
    <property type="evidence" value="ECO:0007669"/>
    <property type="project" value="UniProtKB-KW"/>
</dbReference>
<dbReference type="GO" id="GO:0006435">
    <property type="term" value="P:threonyl-tRNA aminoacylation"/>
    <property type="evidence" value="ECO:0007669"/>
    <property type="project" value="UniProtKB-UniRule"/>
</dbReference>
<dbReference type="CDD" id="cd01667">
    <property type="entry name" value="TGS_ThrRS"/>
    <property type="match status" value="1"/>
</dbReference>
<dbReference type="CDD" id="cd00860">
    <property type="entry name" value="ThrRS_anticodon"/>
    <property type="match status" value="1"/>
</dbReference>
<dbReference type="CDD" id="cd00771">
    <property type="entry name" value="ThrRS_core"/>
    <property type="match status" value="1"/>
</dbReference>
<dbReference type="FunFam" id="3.10.20.30:FF:000005">
    <property type="entry name" value="Threonine--tRNA ligase"/>
    <property type="match status" value="1"/>
</dbReference>
<dbReference type="FunFam" id="3.30.54.20:FF:000002">
    <property type="entry name" value="Threonine--tRNA ligase"/>
    <property type="match status" value="1"/>
</dbReference>
<dbReference type="FunFam" id="3.30.930.10:FF:000002">
    <property type="entry name" value="Threonine--tRNA ligase"/>
    <property type="match status" value="1"/>
</dbReference>
<dbReference type="FunFam" id="3.40.50.800:FF:000001">
    <property type="entry name" value="Threonine--tRNA ligase"/>
    <property type="match status" value="1"/>
</dbReference>
<dbReference type="FunFam" id="3.30.980.10:FF:000005">
    <property type="entry name" value="Threonyl-tRNA synthetase, mitochondrial"/>
    <property type="match status" value="1"/>
</dbReference>
<dbReference type="Gene3D" id="3.10.20.30">
    <property type="match status" value="1"/>
</dbReference>
<dbReference type="Gene3D" id="3.30.54.20">
    <property type="match status" value="1"/>
</dbReference>
<dbReference type="Gene3D" id="3.40.50.800">
    <property type="entry name" value="Anticodon-binding domain"/>
    <property type="match status" value="1"/>
</dbReference>
<dbReference type="Gene3D" id="3.30.930.10">
    <property type="entry name" value="Bira Bifunctional Protein, Domain 2"/>
    <property type="match status" value="1"/>
</dbReference>
<dbReference type="Gene3D" id="3.30.980.10">
    <property type="entry name" value="Threonyl-trna Synthetase, Chain A, domain 2"/>
    <property type="match status" value="1"/>
</dbReference>
<dbReference type="HAMAP" id="MF_00184">
    <property type="entry name" value="Thr_tRNA_synth"/>
    <property type="match status" value="1"/>
</dbReference>
<dbReference type="InterPro" id="IPR002314">
    <property type="entry name" value="aa-tRNA-synt_IIb"/>
</dbReference>
<dbReference type="InterPro" id="IPR006195">
    <property type="entry name" value="aa-tRNA-synth_II"/>
</dbReference>
<dbReference type="InterPro" id="IPR045864">
    <property type="entry name" value="aa-tRNA-synth_II/BPL/LPL"/>
</dbReference>
<dbReference type="InterPro" id="IPR004154">
    <property type="entry name" value="Anticodon-bd"/>
</dbReference>
<dbReference type="InterPro" id="IPR036621">
    <property type="entry name" value="Anticodon-bd_dom_sf"/>
</dbReference>
<dbReference type="InterPro" id="IPR012675">
    <property type="entry name" value="Beta-grasp_dom_sf"/>
</dbReference>
<dbReference type="InterPro" id="IPR004095">
    <property type="entry name" value="TGS"/>
</dbReference>
<dbReference type="InterPro" id="IPR012676">
    <property type="entry name" value="TGS-like"/>
</dbReference>
<dbReference type="InterPro" id="IPR002320">
    <property type="entry name" value="Thr-tRNA-ligase_IIa"/>
</dbReference>
<dbReference type="InterPro" id="IPR018163">
    <property type="entry name" value="Thr/Ala-tRNA-synth_IIc_edit"/>
</dbReference>
<dbReference type="InterPro" id="IPR047246">
    <property type="entry name" value="ThrRS_anticodon"/>
</dbReference>
<dbReference type="InterPro" id="IPR033728">
    <property type="entry name" value="ThrRS_core"/>
</dbReference>
<dbReference type="InterPro" id="IPR012947">
    <property type="entry name" value="tRNA_SAD"/>
</dbReference>
<dbReference type="NCBIfam" id="TIGR00418">
    <property type="entry name" value="thrS"/>
    <property type="match status" value="1"/>
</dbReference>
<dbReference type="PANTHER" id="PTHR11451:SF44">
    <property type="entry name" value="THREONINE--TRNA LIGASE, CHLOROPLASTIC_MITOCHONDRIAL 2"/>
    <property type="match status" value="1"/>
</dbReference>
<dbReference type="PANTHER" id="PTHR11451">
    <property type="entry name" value="THREONINE-TRNA LIGASE"/>
    <property type="match status" value="1"/>
</dbReference>
<dbReference type="Pfam" id="PF03129">
    <property type="entry name" value="HGTP_anticodon"/>
    <property type="match status" value="1"/>
</dbReference>
<dbReference type="Pfam" id="PF02824">
    <property type="entry name" value="TGS"/>
    <property type="match status" value="1"/>
</dbReference>
<dbReference type="Pfam" id="PF00587">
    <property type="entry name" value="tRNA-synt_2b"/>
    <property type="match status" value="1"/>
</dbReference>
<dbReference type="Pfam" id="PF07973">
    <property type="entry name" value="tRNA_SAD"/>
    <property type="match status" value="1"/>
</dbReference>
<dbReference type="PRINTS" id="PR01047">
    <property type="entry name" value="TRNASYNTHTHR"/>
</dbReference>
<dbReference type="SMART" id="SM00863">
    <property type="entry name" value="tRNA_SAD"/>
    <property type="match status" value="1"/>
</dbReference>
<dbReference type="SUPFAM" id="SSF52954">
    <property type="entry name" value="Class II aaRS ABD-related"/>
    <property type="match status" value="1"/>
</dbReference>
<dbReference type="SUPFAM" id="SSF55681">
    <property type="entry name" value="Class II aaRS and biotin synthetases"/>
    <property type="match status" value="1"/>
</dbReference>
<dbReference type="SUPFAM" id="SSF81271">
    <property type="entry name" value="TGS-like"/>
    <property type="match status" value="1"/>
</dbReference>
<dbReference type="SUPFAM" id="SSF55186">
    <property type="entry name" value="ThrRS/AlaRS common domain"/>
    <property type="match status" value="1"/>
</dbReference>
<dbReference type="PROSITE" id="PS50862">
    <property type="entry name" value="AA_TRNA_LIGASE_II"/>
    <property type="match status" value="1"/>
</dbReference>
<dbReference type="PROSITE" id="PS51880">
    <property type="entry name" value="TGS"/>
    <property type="match status" value="1"/>
</dbReference>
<gene>
    <name evidence="1" type="primary">thrS</name>
    <name type="ordered locus">Pnap_2854</name>
</gene>